<reference key="1">
    <citation type="journal article" date="2007" name="PLoS ONE">
        <title>Molecular correlates of host specialization in Staphylococcus aureus.</title>
        <authorList>
            <person name="Herron-Olson L."/>
            <person name="Fitzgerald J.R."/>
            <person name="Musser J.M."/>
            <person name="Kapur V."/>
        </authorList>
    </citation>
    <scope>NUCLEOTIDE SEQUENCE [LARGE SCALE GENOMIC DNA]</scope>
    <source>
        <strain>bovine RF122 / ET3-1</strain>
    </source>
</reference>
<feature type="chain" id="PRO_0000298648" description="Uncharacterized protein SAB1858c">
    <location>
        <begin position="1"/>
        <end position="342"/>
    </location>
</feature>
<protein>
    <recommendedName>
        <fullName>Uncharacterized protein SAB1858c</fullName>
    </recommendedName>
</protein>
<dbReference type="EMBL" id="AJ938182">
    <property type="protein sequence ID" value="CAI81547.1"/>
    <property type="molecule type" value="Genomic_DNA"/>
</dbReference>
<dbReference type="RefSeq" id="WP_000181328.1">
    <property type="nucleotide sequence ID" value="NC_007622.1"/>
</dbReference>
<dbReference type="SMR" id="Q2YU76"/>
<dbReference type="KEGG" id="sab:SAB1858c"/>
<dbReference type="HOGENOM" id="CLU_038716_3_0_9"/>
<dbReference type="GO" id="GO:0005829">
    <property type="term" value="C:cytosol"/>
    <property type="evidence" value="ECO:0007669"/>
    <property type="project" value="TreeGrafter"/>
</dbReference>
<dbReference type="GO" id="GO:0017057">
    <property type="term" value="F:6-phosphogluconolactonase activity"/>
    <property type="evidence" value="ECO:0007669"/>
    <property type="project" value="TreeGrafter"/>
</dbReference>
<dbReference type="Gene3D" id="2.130.10.10">
    <property type="entry name" value="YVTN repeat-like/Quinoprotein amine dehydrogenase"/>
    <property type="match status" value="1"/>
</dbReference>
<dbReference type="InterPro" id="IPR050282">
    <property type="entry name" value="Cycloisomerase_2"/>
</dbReference>
<dbReference type="InterPro" id="IPR011048">
    <property type="entry name" value="Haem_d1_sf"/>
</dbReference>
<dbReference type="InterPro" id="IPR019405">
    <property type="entry name" value="Lactonase_7-beta_prop"/>
</dbReference>
<dbReference type="InterPro" id="IPR015943">
    <property type="entry name" value="WD40/YVTN_repeat-like_dom_sf"/>
</dbReference>
<dbReference type="PANTHER" id="PTHR30344:SF1">
    <property type="entry name" value="6-PHOSPHOGLUCONOLACTONASE"/>
    <property type="match status" value="1"/>
</dbReference>
<dbReference type="PANTHER" id="PTHR30344">
    <property type="entry name" value="6-PHOSPHOGLUCONOLACTONASE-RELATED"/>
    <property type="match status" value="1"/>
</dbReference>
<dbReference type="Pfam" id="PF10282">
    <property type="entry name" value="Lactonase"/>
    <property type="match status" value="1"/>
</dbReference>
<dbReference type="SUPFAM" id="SSF51004">
    <property type="entry name" value="C-terminal (heme d1) domain of cytochrome cd1-nitrite reductase"/>
    <property type="match status" value="1"/>
</dbReference>
<gene>
    <name type="ordered locus">SAB1858c</name>
</gene>
<accession>Q2YU76</accession>
<evidence type="ECO:0000305" key="1"/>
<proteinExistence type="inferred from homology"/>
<organism>
    <name type="scientific">Staphylococcus aureus (strain bovine RF122 / ET3-1)</name>
    <dbReference type="NCBI Taxonomy" id="273036"/>
    <lineage>
        <taxon>Bacteria</taxon>
        <taxon>Bacillati</taxon>
        <taxon>Bacillota</taxon>
        <taxon>Bacilli</taxon>
        <taxon>Bacillales</taxon>
        <taxon>Staphylococcaceae</taxon>
        <taxon>Staphylococcus</taxon>
    </lineage>
</organism>
<sequence length="342" mass="38564">MTNGYIGSYTKKNGKGIYRFELNENQSRIDLLETGFELEASTYLVRNNEVLYGINKEGEQCGVASLKIDDNGELHLLNKCLSSKAGTGCYVSISEDKRYLFEAVYGDGIIRMYELNTHTGEIIRLIQELAHDFPTGTHERQDHPHAHYINQTPDGKYVAVTDLGADRIVTYKFDDNGFEFYKESLFKDSDGTRHIEFHDNGKFAYVVHELSNTVSVAEYNDGKFEELERHLTIPESFDGDTKLAAVRLSHDQQFLYVSNRGHDSIAIFKVLDNGQHLELVTITESGGQFPRDFNIASSDDLLVCAHEQGDSVVTVFERNKETGKITLCDNTRVASEGVCVIF</sequence>
<name>Y1858_STAAB</name>
<comment type="similarity">
    <text evidence="1">Belongs to the cycloisomerase 2 family.</text>
</comment>